<name>PGK_ARTS2</name>
<gene>
    <name evidence="1" type="primary">pgk</name>
    <name type="ordered locus">Arth_2088</name>
</gene>
<comment type="catalytic activity">
    <reaction evidence="1">
        <text>(2R)-3-phosphoglycerate + ATP = (2R)-3-phospho-glyceroyl phosphate + ADP</text>
        <dbReference type="Rhea" id="RHEA:14801"/>
        <dbReference type="ChEBI" id="CHEBI:30616"/>
        <dbReference type="ChEBI" id="CHEBI:57604"/>
        <dbReference type="ChEBI" id="CHEBI:58272"/>
        <dbReference type="ChEBI" id="CHEBI:456216"/>
        <dbReference type="EC" id="2.7.2.3"/>
    </reaction>
</comment>
<comment type="pathway">
    <text evidence="1">Carbohydrate degradation; glycolysis; pyruvate from D-glyceraldehyde 3-phosphate: step 2/5.</text>
</comment>
<comment type="subunit">
    <text evidence="1">Monomer.</text>
</comment>
<comment type="subcellular location">
    <subcellularLocation>
        <location evidence="1">Cytoplasm</location>
    </subcellularLocation>
</comment>
<comment type="similarity">
    <text evidence="1">Belongs to the phosphoglycerate kinase family.</text>
</comment>
<reference key="1">
    <citation type="journal article" date="2013" name="Stand. Genomic Sci.">
        <title>Complete genome sequence of Arthrobacter sp. strain FB24.</title>
        <authorList>
            <person name="Nakatsu C.H."/>
            <person name="Barabote R."/>
            <person name="Thompson S."/>
            <person name="Bruce D."/>
            <person name="Detter C."/>
            <person name="Brettin T."/>
            <person name="Han C."/>
            <person name="Beasley F."/>
            <person name="Chen W."/>
            <person name="Konopka A."/>
            <person name="Xie G."/>
        </authorList>
    </citation>
    <scope>NUCLEOTIDE SEQUENCE [LARGE SCALE GENOMIC DNA]</scope>
    <source>
        <strain>FB24</strain>
    </source>
</reference>
<feature type="chain" id="PRO_1000009604" description="Phosphoglycerate kinase">
    <location>
        <begin position="1"/>
        <end position="408"/>
    </location>
</feature>
<feature type="binding site" evidence="1">
    <location>
        <begin position="24"/>
        <end position="26"/>
    </location>
    <ligand>
        <name>substrate</name>
    </ligand>
</feature>
<feature type="binding site" evidence="1">
    <location>
        <position position="39"/>
    </location>
    <ligand>
        <name>substrate</name>
    </ligand>
</feature>
<feature type="binding site" evidence="1">
    <location>
        <begin position="62"/>
        <end position="65"/>
    </location>
    <ligand>
        <name>substrate</name>
    </ligand>
</feature>
<feature type="binding site" evidence="1">
    <location>
        <position position="121"/>
    </location>
    <ligand>
        <name>substrate</name>
    </ligand>
</feature>
<feature type="binding site" evidence="1">
    <location>
        <position position="161"/>
    </location>
    <ligand>
        <name>substrate</name>
    </ligand>
</feature>
<feature type="binding site" evidence="1">
    <location>
        <position position="211"/>
    </location>
    <ligand>
        <name>ATP</name>
        <dbReference type="ChEBI" id="CHEBI:30616"/>
    </ligand>
</feature>
<feature type="binding site" evidence="1">
    <location>
        <position position="307"/>
    </location>
    <ligand>
        <name>ATP</name>
        <dbReference type="ChEBI" id="CHEBI:30616"/>
    </ligand>
</feature>
<feature type="binding site" evidence="1">
    <location>
        <position position="338"/>
    </location>
    <ligand>
        <name>ATP</name>
        <dbReference type="ChEBI" id="CHEBI:30616"/>
    </ligand>
</feature>
<feature type="binding site" evidence="1">
    <location>
        <begin position="364"/>
        <end position="367"/>
    </location>
    <ligand>
        <name>ATP</name>
        <dbReference type="ChEBI" id="CHEBI:30616"/>
    </ligand>
</feature>
<accession>A0JWP8</accession>
<organism>
    <name type="scientific">Arthrobacter sp. (strain FB24)</name>
    <dbReference type="NCBI Taxonomy" id="290399"/>
    <lineage>
        <taxon>Bacteria</taxon>
        <taxon>Bacillati</taxon>
        <taxon>Actinomycetota</taxon>
        <taxon>Actinomycetes</taxon>
        <taxon>Micrococcales</taxon>
        <taxon>Micrococcaceae</taxon>
        <taxon>Arthrobacter</taxon>
    </lineage>
</organism>
<keyword id="KW-0067">ATP-binding</keyword>
<keyword id="KW-0963">Cytoplasm</keyword>
<keyword id="KW-0324">Glycolysis</keyword>
<keyword id="KW-0418">Kinase</keyword>
<keyword id="KW-0547">Nucleotide-binding</keyword>
<keyword id="KW-1185">Reference proteome</keyword>
<keyword id="KW-0808">Transferase</keyword>
<protein>
    <recommendedName>
        <fullName evidence="1">Phosphoglycerate kinase</fullName>
        <ecNumber evidence="1">2.7.2.3</ecNumber>
    </recommendedName>
</protein>
<evidence type="ECO:0000255" key="1">
    <source>
        <dbReference type="HAMAP-Rule" id="MF_00145"/>
    </source>
</evidence>
<dbReference type="EC" id="2.7.2.3" evidence="1"/>
<dbReference type="EMBL" id="CP000454">
    <property type="protein sequence ID" value="ABK03468.1"/>
    <property type="molecule type" value="Genomic_DNA"/>
</dbReference>
<dbReference type="RefSeq" id="WP_011691934.1">
    <property type="nucleotide sequence ID" value="NC_008541.1"/>
</dbReference>
<dbReference type="SMR" id="A0JWP8"/>
<dbReference type="STRING" id="290399.Arth_2088"/>
<dbReference type="KEGG" id="art:Arth_2088"/>
<dbReference type="eggNOG" id="COG0126">
    <property type="taxonomic scope" value="Bacteria"/>
</dbReference>
<dbReference type="HOGENOM" id="CLU_025427_0_2_11"/>
<dbReference type="OrthoDB" id="9808460at2"/>
<dbReference type="UniPathway" id="UPA00109">
    <property type="reaction ID" value="UER00185"/>
</dbReference>
<dbReference type="Proteomes" id="UP000000754">
    <property type="component" value="Chromosome"/>
</dbReference>
<dbReference type="GO" id="GO:0005829">
    <property type="term" value="C:cytosol"/>
    <property type="evidence" value="ECO:0007669"/>
    <property type="project" value="TreeGrafter"/>
</dbReference>
<dbReference type="GO" id="GO:0043531">
    <property type="term" value="F:ADP binding"/>
    <property type="evidence" value="ECO:0007669"/>
    <property type="project" value="TreeGrafter"/>
</dbReference>
<dbReference type="GO" id="GO:0005524">
    <property type="term" value="F:ATP binding"/>
    <property type="evidence" value="ECO:0007669"/>
    <property type="project" value="UniProtKB-KW"/>
</dbReference>
<dbReference type="GO" id="GO:0004618">
    <property type="term" value="F:phosphoglycerate kinase activity"/>
    <property type="evidence" value="ECO:0007669"/>
    <property type="project" value="UniProtKB-UniRule"/>
</dbReference>
<dbReference type="GO" id="GO:0006094">
    <property type="term" value="P:gluconeogenesis"/>
    <property type="evidence" value="ECO:0007669"/>
    <property type="project" value="TreeGrafter"/>
</dbReference>
<dbReference type="GO" id="GO:0006096">
    <property type="term" value="P:glycolytic process"/>
    <property type="evidence" value="ECO:0007669"/>
    <property type="project" value="UniProtKB-UniRule"/>
</dbReference>
<dbReference type="FunFam" id="3.40.50.1260:FF:000006">
    <property type="entry name" value="Phosphoglycerate kinase"/>
    <property type="match status" value="1"/>
</dbReference>
<dbReference type="FunFam" id="3.40.50.1260:FF:000031">
    <property type="entry name" value="Phosphoglycerate kinase 1"/>
    <property type="match status" value="1"/>
</dbReference>
<dbReference type="Gene3D" id="3.40.50.1260">
    <property type="entry name" value="Phosphoglycerate kinase, N-terminal domain"/>
    <property type="match status" value="2"/>
</dbReference>
<dbReference type="HAMAP" id="MF_00145">
    <property type="entry name" value="Phosphoglyc_kinase"/>
    <property type="match status" value="1"/>
</dbReference>
<dbReference type="InterPro" id="IPR001576">
    <property type="entry name" value="Phosphoglycerate_kinase"/>
</dbReference>
<dbReference type="InterPro" id="IPR015824">
    <property type="entry name" value="Phosphoglycerate_kinase_N"/>
</dbReference>
<dbReference type="InterPro" id="IPR036043">
    <property type="entry name" value="Phosphoglycerate_kinase_sf"/>
</dbReference>
<dbReference type="PANTHER" id="PTHR11406">
    <property type="entry name" value="PHOSPHOGLYCERATE KINASE"/>
    <property type="match status" value="1"/>
</dbReference>
<dbReference type="PANTHER" id="PTHR11406:SF23">
    <property type="entry name" value="PHOSPHOGLYCERATE KINASE 1, CHLOROPLASTIC-RELATED"/>
    <property type="match status" value="1"/>
</dbReference>
<dbReference type="Pfam" id="PF00162">
    <property type="entry name" value="PGK"/>
    <property type="match status" value="1"/>
</dbReference>
<dbReference type="PIRSF" id="PIRSF000724">
    <property type="entry name" value="Pgk"/>
    <property type="match status" value="1"/>
</dbReference>
<dbReference type="PRINTS" id="PR00477">
    <property type="entry name" value="PHGLYCKINASE"/>
</dbReference>
<dbReference type="SUPFAM" id="SSF53748">
    <property type="entry name" value="Phosphoglycerate kinase"/>
    <property type="match status" value="1"/>
</dbReference>
<sequence length="408" mass="42808">MTFHTLNELIADGVRGRYILVRSDLNVPLDGSEVTDDGRIKASLPVLTKLTDAGARVLVTAHLGRPKGAPEEKYSLKPAATRLAELAPFQVTLAGDTVGASAKEHAAALQDGEVLVLENVRFDARETSKDDAERGAFADELVSLTGENGAFVDDAFGAVHRKHASVYDVATRLPSYQGDLVHTEVEVLRKLTTETQRPYVVVLGGSKVSDKLAVIDNLIGKADTILVGGGMLFTFLAADGHKVAGSLLEEDQIPVVQDYLKRAADAGTEFVVPTDVVVAAKFAADADHETVRADAIEGSSFGAQGIGLDIGPESAAEFANRIKGAKTVFWNGPMGVFEFDAFAGGTRAIALALTEADAFTVVGGGDSAAAVRTLGFADDQFGHISTGGGASLEYLEGKELPGLSVLDR</sequence>
<proteinExistence type="inferred from homology"/>